<dbReference type="EMBL" id="AE006468">
    <property type="protein sequence ID" value="AAL21570.1"/>
    <property type="molecule type" value="Genomic_DNA"/>
</dbReference>
<dbReference type="RefSeq" id="NP_461611.1">
    <property type="nucleotide sequence ID" value="NC_003197.2"/>
</dbReference>
<dbReference type="RefSeq" id="WP_001518875.1">
    <property type="nucleotide sequence ID" value="NC_003197.2"/>
</dbReference>
<dbReference type="SMR" id="Q7CPZ4"/>
<dbReference type="STRING" id="99287.STM2681"/>
<dbReference type="PaxDb" id="99287-STM2681"/>
<dbReference type="GeneID" id="1254204"/>
<dbReference type="KEGG" id="stm:STM2681"/>
<dbReference type="PATRIC" id="fig|99287.12.peg.2826"/>
<dbReference type="HOGENOM" id="CLU_057217_6_0_6"/>
<dbReference type="OMA" id="PHRHQAI"/>
<dbReference type="PhylomeDB" id="Q7CPZ4"/>
<dbReference type="BioCyc" id="SENT99287:STM2681-MONOMER"/>
<dbReference type="Proteomes" id="UP000001014">
    <property type="component" value="Chromosome"/>
</dbReference>
<dbReference type="GO" id="GO:0005829">
    <property type="term" value="C:cytosol"/>
    <property type="evidence" value="ECO:0000318"/>
    <property type="project" value="GO_Central"/>
</dbReference>
<dbReference type="GO" id="GO:0000774">
    <property type="term" value="F:adenyl-nucleotide exchange factor activity"/>
    <property type="evidence" value="ECO:0000318"/>
    <property type="project" value="GO_Central"/>
</dbReference>
<dbReference type="GO" id="GO:0042803">
    <property type="term" value="F:protein homodimerization activity"/>
    <property type="evidence" value="ECO:0007669"/>
    <property type="project" value="InterPro"/>
</dbReference>
<dbReference type="GO" id="GO:0051087">
    <property type="term" value="F:protein-folding chaperone binding"/>
    <property type="evidence" value="ECO:0007669"/>
    <property type="project" value="InterPro"/>
</dbReference>
<dbReference type="GO" id="GO:0051082">
    <property type="term" value="F:unfolded protein binding"/>
    <property type="evidence" value="ECO:0000318"/>
    <property type="project" value="GO_Central"/>
</dbReference>
<dbReference type="GO" id="GO:0006457">
    <property type="term" value="P:protein folding"/>
    <property type="evidence" value="ECO:0007669"/>
    <property type="project" value="InterPro"/>
</dbReference>
<dbReference type="CDD" id="cd00446">
    <property type="entry name" value="GrpE"/>
    <property type="match status" value="1"/>
</dbReference>
<dbReference type="FunFam" id="2.30.22.10:FF:000001">
    <property type="entry name" value="Protein GrpE"/>
    <property type="match status" value="1"/>
</dbReference>
<dbReference type="FunFam" id="3.90.20.20:FF:000001">
    <property type="entry name" value="Protein GrpE"/>
    <property type="match status" value="1"/>
</dbReference>
<dbReference type="Gene3D" id="3.90.20.20">
    <property type="match status" value="1"/>
</dbReference>
<dbReference type="Gene3D" id="2.30.22.10">
    <property type="entry name" value="Head domain of nucleotide exchange factor GrpE"/>
    <property type="match status" value="1"/>
</dbReference>
<dbReference type="HAMAP" id="MF_01151">
    <property type="entry name" value="GrpE"/>
    <property type="match status" value="1"/>
</dbReference>
<dbReference type="InterPro" id="IPR000740">
    <property type="entry name" value="GrpE"/>
</dbReference>
<dbReference type="InterPro" id="IPR013805">
    <property type="entry name" value="GrpE_coiled_coil"/>
</dbReference>
<dbReference type="InterPro" id="IPR009012">
    <property type="entry name" value="GrpE_head"/>
</dbReference>
<dbReference type="NCBIfam" id="NF007655">
    <property type="entry name" value="PRK10325.1"/>
    <property type="match status" value="1"/>
</dbReference>
<dbReference type="NCBIfam" id="NF010738">
    <property type="entry name" value="PRK14140.1"/>
    <property type="match status" value="1"/>
</dbReference>
<dbReference type="NCBIfam" id="NF010748">
    <property type="entry name" value="PRK14150.1"/>
    <property type="match status" value="1"/>
</dbReference>
<dbReference type="PANTHER" id="PTHR21237">
    <property type="entry name" value="GRPE PROTEIN"/>
    <property type="match status" value="1"/>
</dbReference>
<dbReference type="PANTHER" id="PTHR21237:SF23">
    <property type="entry name" value="GRPE PROTEIN HOMOLOG, MITOCHONDRIAL"/>
    <property type="match status" value="1"/>
</dbReference>
<dbReference type="Pfam" id="PF01025">
    <property type="entry name" value="GrpE"/>
    <property type="match status" value="1"/>
</dbReference>
<dbReference type="PRINTS" id="PR00773">
    <property type="entry name" value="GRPEPROTEIN"/>
</dbReference>
<dbReference type="SUPFAM" id="SSF58014">
    <property type="entry name" value="Coiled-coil domain of nucleotide exchange factor GrpE"/>
    <property type="match status" value="1"/>
</dbReference>
<dbReference type="SUPFAM" id="SSF51064">
    <property type="entry name" value="Head domain of nucleotide exchange factor GrpE"/>
    <property type="match status" value="1"/>
</dbReference>
<dbReference type="PROSITE" id="PS01071">
    <property type="entry name" value="GRPE"/>
    <property type="match status" value="1"/>
</dbReference>
<reference key="1">
    <citation type="journal article" date="2001" name="Nature">
        <title>Complete genome sequence of Salmonella enterica serovar Typhimurium LT2.</title>
        <authorList>
            <person name="McClelland M."/>
            <person name="Sanderson K.E."/>
            <person name="Spieth J."/>
            <person name="Clifton S.W."/>
            <person name="Latreille P."/>
            <person name="Courtney L."/>
            <person name="Porwollik S."/>
            <person name="Ali J."/>
            <person name="Dante M."/>
            <person name="Du F."/>
            <person name="Hou S."/>
            <person name="Layman D."/>
            <person name="Leonard S."/>
            <person name="Nguyen C."/>
            <person name="Scott K."/>
            <person name="Holmes A."/>
            <person name="Grewal N."/>
            <person name="Mulvaney E."/>
            <person name="Ryan E."/>
            <person name="Sun H."/>
            <person name="Florea L."/>
            <person name="Miller W."/>
            <person name="Stoneking T."/>
            <person name="Nhan M."/>
            <person name="Waterston R."/>
            <person name="Wilson R.K."/>
        </authorList>
    </citation>
    <scope>NUCLEOTIDE SEQUENCE [LARGE SCALE GENOMIC DNA]</scope>
    <source>
        <strain>LT2 / SGSC1412 / ATCC 700720</strain>
    </source>
</reference>
<organism>
    <name type="scientific">Salmonella typhimurium (strain LT2 / SGSC1412 / ATCC 700720)</name>
    <dbReference type="NCBI Taxonomy" id="99287"/>
    <lineage>
        <taxon>Bacteria</taxon>
        <taxon>Pseudomonadati</taxon>
        <taxon>Pseudomonadota</taxon>
        <taxon>Gammaproteobacteria</taxon>
        <taxon>Enterobacterales</taxon>
        <taxon>Enterobacteriaceae</taxon>
        <taxon>Salmonella</taxon>
    </lineage>
</organism>
<gene>
    <name evidence="1" type="primary">grpE</name>
    <name type="ordered locus">STM2681</name>
</gene>
<proteinExistence type="inferred from homology"/>
<sequence>MSSKEQKTPEGQAPEEIIMDQHEEVEAVEPNDSAEQVDPRDEKIANLEVQLAEAQTRERDTVLRIKAEMENLRRRTEQDIEKAHKFALEKFVNELLPVIDSLDRALEVADKANPDMAAMVEGIELTLKSMLDVVRKFGVEVIAETNVPLDPNVHQAIAMVESEEVPAGNVLGIMQKGYTLNGRTIRAAMVTVAKAK</sequence>
<evidence type="ECO:0000255" key="1">
    <source>
        <dbReference type="HAMAP-Rule" id="MF_01151"/>
    </source>
</evidence>
<evidence type="ECO:0000256" key="2">
    <source>
        <dbReference type="SAM" id="MobiDB-lite"/>
    </source>
</evidence>
<name>GRPE_SALTY</name>
<accession>Q7CPZ4</accession>
<comment type="function">
    <text evidence="1">Participates actively in the response to hyperosmotic and heat shock by preventing the aggregation of stress-denatured proteins, in association with DnaK and GrpE. It is the nucleotide exchange factor for DnaK and may function as a thermosensor. Unfolded proteins bind initially to DnaJ; upon interaction with the DnaJ-bound protein, DnaK hydrolyzes its bound ATP, resulting in the formation of a stable complex. GrpE releases ADP from DnaK; ATP binding to DnaK triggers the release of the substrate protein, thus completing the reaction cycle. Several rounds of ATP-dependent interactions between DnaJ, DnaK and GrpE are required for fully efficient folding.</text>
</comment>
<comment type="subunit">
    <text evidence="1">Homodimer.</text>
</comment>
<comment type="subcellular location">
    <subcellularLocation>
        <location evidence="1">Cytoplasm</location>
    </subcellularLocation>
</comment>
<comment type="similarity">
    <text evidence="1">Belongs to the GrpE family.</text>
</comment>
<protein>
    <recommendedName>
        <fullName evidence="1">Protein GrpE</fullName>
    </recommendedName>
    <alternativeName>
        <fullName evidence="1">HSP-70 cofactor</fullName>
    </alternativeName>
</protein>
<feature type="chain" id="PRO_0000113851" description="Protein GrpE">
    <location>
        <begin position="1"/>
        <end position="196"/>
    </location>
</feature>
<feature type="region of interest" description="Disordered" evidence="2">
    <location>
        <begin position="1"/>
        <end position="40"/>
    </location>
</feature>
<keyword id="KW-0143">Chaperone</keyword>
<keyword id="KW-0963">Cytoplasm</keyword>
<keyword id="KW-1185">Reference proteome</keyword>
<keyword id="KW-0346">Stress response</keyword>